<accession>Q8DC72</accession>
<reference key="1">
    <citation type="submission" date="2002-12" db="EMBL/GenBank/DDBJ databases">
        <title>Complete genome sequence of Vibrio vulnificus CMCP6.</title>
        <authorList>
            <person name="Rhee J.H."/>
            <person name="Kim S.Y."/>
            <person name="Chung S.S."/>
            <person name="Kim J.J."/>
            <person name="Moon Y.H."/>
            <person name="Jeong H."/>
            <person name="Choy H.E."/>
        </authorList>
    </citation>
    <scope>NUCLEOTIDE SEQUENCE [LARGE SCALE GENOMIC DNA]</scope>
    <source>
        <strain>CMCP6</strain>
    </source>
</reference>
<feature type="chain" id="PRO_0000175728" description="Holo-[acyl-carrier-protein] synthase">
    <location>
        <begin position="1"/>
        <end position="126"/>
    </location>
</feature>
<feature type="binding site" evidence="1">
    <location>
        <position position="9"/>
    </location>
    <ligand>
        <name>Mg(2+)</name>
        <dbReference type="ChEBI" id="CHEBI:18420"/>
    </ligand>
</feature>
<feature type="binding site" evidence="1">
    <location>
        <position position="58"/>
    </location>
    <ligand>
        <name>Mg(2+)</name>
        <dbReference type="ChEBI" id="CHEBI:18420"/>
    </ligand>
</feature>
<evidence type="ECO:0000255" key="1">
    <source>
        <dbReference type="HAMAP-Rule" id="MF_00101"/>
    </source>
</evidence>
<protein>
    <recommendedName>
        <fullName evidence="1">Holo-[acyl-carrier-protein] synthase</fullName>
        <shortName evidence="1">Holo-ACP synthase</shortName>
        <ecNumber evidence="1">2.7.8.7</ecNumber>
    </recommendedName>
    <alternativeName>
        <fullName evidence="1">4'-phosphopantetheinyl transferase AcpS</fullName>
    </alternativeName>
</protein>
<keyword id="KW-0963">Cytoplasm</keyword>
<keyword id="KW-0275">Fatty acid biosynthesis</keyword>
<keyword id="KW-0276">Fatty acid metabolism</keyword>
<keyword id="KW-0444">Lipid biosynthesis</keyword>
<keyword id="KW-0443">Lipid metabolism</keyword>
<keyword id="KW-0460">Magnesium</keyword>
<keyword id="KW-0479">Metal-binding</keyword>
<keyword id="KW-0808">Transferase</keyword>
<sequence length="126" mass="13634">MAIVGLGTDIAEIERVEKALARSGVAFAERILSAQEMETFVSLKQQGRFLAKRFAAKEAASKALGTGIAHGVSFQDFTIKNDDNGKPYLQLAGRAAELAHQMGVCHTHLSLSDERHYAVATVIFES</sequence>
<organism>
    <name type="scientific">Vibrio vulnificus (strain CMCP6)</name>
    <dbReference type="NCBI Taxonomy" id="216895"/>
    <lineage>
        <taxon>Bacteria</taxon>
        <taxon>Pseudomonadati</taxon>
        <taxon>Pseudomonadota</taxon>
        <taxon>Gammaproteobacteria</taxon>
        <taxon>Vibrionales</taxon>
        <taxon>Vibrionaceae</taxon>
        <taxon>Vibrio</taxon>
    </lineage>
</organism>
<gene>
    <name evidence="1" type="primary">acpS</name>
    <name type="ordered locus">VV1_1569</name>
</gene>
<dbReference type="EC" id="2.7.8.7" evidence="1"/>
<dbReference type="EMBL" id="AE016795">
    <property type="protein sequence ID" value="AAO09993.1"/>
    <property type="molecule type" value="Genomic_DNA"/>
</dbReference>
<dbReference type="RefSeq" id="WP_011079504.1">
    <property type="nucleotide sequence ID" value="NC_004459.3"/>
</dbReference>
<dbReference type="SMR" id="Q8DC72"/>
<dbReference type="KEGG" id="vvu:VV1_1569"/>
<dbReference type="HOGENOM" id="CLU_089696_3_1_6"/>
<dbReference type="Proteomes" id="UP000002275">
    <property type="component" value="Chromosome 1"/>
</dbReference>
<dbReference type="GO" id="GO:0005829">
    <property type="term" value="C:cytosol"/>
    <property type="evidence" value="ECO:0007669"/>
    <property type="project" value="TreeGrafter"/>
</dbReference>
<dbReference type="GO" id="GO:0008897">
    <property type="term" value="F:holo-[acyl-carrier-protein] synthase activity"/>
    <property type="evidence" value="ECO:0007669"/>
    <property type="project" value="UniProtKB-UniRule"/>
</dbReference>
<dbReference type="GO" id="GO:0000287">
    <property type="term" value="F:magnesium ion binding"/>
    <property type="evidence" value="ECO:0007669"/>
    <property type="project" value="UniProtKB-UniRule"/>
</dbReference>
<dbReference type="GO" id="GO:0006633">
    <property type="term" value="P:fatty acid biosynthetic process"/>
    <property type="evidence" value="ECO:0007669"/>
    <property type="project" value="UniProtKB-UniRule"/>
</dbReference>
<dbReference type="GO" id="GO:0019878">
    <property type="term" value="P:lysine biosynthetic process via aminoadipic acid"/>
    <property type="evidence" value="ECO:0007669"/>
    <property type="project" value="TreeGrafter"/>
</dbReference>
<dbReference type="FunFam" id="3.90.470.20:FF:000001">
    <property type="entry name" value="Holo-[acyl-carrier-protein] synthase"/>
    <property type="match status" value="1"/>
</dbReference>
<dbReference type="Gene3D" id="3.90.470.20">
    <property type="entry name" value="4'-phosphopantetheinyl transferase domain"/>
    <property type="match status" value="1"/>
</dbReference>
<dbReference type="HAMAP" id="MF_00101">
    <property type="entry name" value="AcpS"/>
    <property type="match status" value="1"/>
</dbReference>
<dbReference type="InterPro" id="IPR008278">
    <property type="entry name" value="4-PPantetheinyl_Trfase_dom"/>
</dbReference>
<dbReference type="InterPro" id="IPR037143">
    <property type="entry name" value="4-PPantetheinyl_Trfase_dom_sf"/>
</dbReference>
<dbReference type="InterPro" id="IPR002582">
    <property type="entry name" value="ACPS"/>
</dbReference>
<dbReference type="InterPro" id="IPR050559">
    <property type="entry name" value="P-Pant_transferase_sf"/>
</dbReference>
<dbReference type="InterPro" id="IPR004568">
    <property type="entry name" value="Ppantetheine-prot_Trfase_dom"/>
</dbReference>
<dbReference type="NCBIfam" id="TIGR00516">
    <property type="entry name" value="acpS"/>
    <property type="match status" value="1"/>
</dbReference>
<dbReference type="NCBIfam" id="TIGR00556">
    <property type="entry name" value="pantethn_trn"/>
    <property type="match status" value="1"/>
</dbReference>
<dbReference type="PANTHER" id="PTHR12215:SF10">
    <property type="entry name" value="L-AMINOADIPATE-SEMIALDEHYDE DEHYDROGENASE-PHOSPHOPANTETHEINYL TRANSFERASE"/>
    <property type="match status" value="1"/>
</dbReference>
<dbReference type="PANTHER" id="PTHR12215">
    <property type="entry name" value="PHOSPHOPANTETHEINE TRANSFERASE"/>
    <property type="match status" value="1"/>
</dbReference>
<dbReference type="Pfam" id="PF01648">
    <property type="entry name" value="ACPS"/>
    <property type="match status" value="1"/>
</dbReference>
<dbReference type="SUPFAM" id="SSF56214">
    <property type="entry name" value="4'-phosphopantetheinyl transferase"/>
    <property type="match status" value="1"/>
</dbReference>
<name>ACPS_VIBVU</name>
<proteinExistence type="inferred from homology"/>
<comment type="function">
    <text evidence="1">Transfers the 4'-phosphopantetheine moiety from coenzyme A to a Ser of acyl-carrier-protein.</text>
</comment>
<comment type="catalytic activity">
    <reaction evidence="1">
        <text>apo-[ACP] + CoA = holo-[ACP] + adenosine 3',5'-bisphosphate + H(+)</text>
        <dbReference type="Rhea" id="RHEA:12068"/>
        <dbReference type="Rhea" id="RHEA-COMP:9685"/>
        <dbReference type="Rhea" id="RHEA-COMP:9690"/>
        <dbReference type="ChEBI" id="CHEBI:15378"/>
        <dbReference type="ChEBI" id="CHEBI:29999"/>
        <dbReference type="ChEBI" id="CHEBI:57287"/>
        <dbReference type="ChEBI" id="CHEBI:58343"/>
        <dbReference type="ChEBI" id="CHEBI:64479"/>
        <dbReference type="EC" id="2.7.8.7"/>
    </reaction>
</comment>
<comment type="cofactor">
    <cofactor evidence="1">
        <name>Mg(2+)</name>
        <dbReference type="ChEBI" id="CHEBI:18420"/>
    </cofactor>
</comment>
<comment type="subcellular location">
    <subcellularLocation>
        <location evidence="1">Cytoplasm</location>
    </subcellularLocation>
</comment>
<comment type="similarity">
    <text evidence="1">Belongs to the P-Pant transferase superfamily. AcpS family.</text>
</comment>